<comment type="function">
    <text evidence="1">Inhibits papain, ficin and bromelain with an IC(50) of 0.09 uM, 0.115 uM and 0.113 uM respectively. Has antibacterial activity against Gram-positive bacteria S.aureus and S.hemolyticus, and against the Gram-negative bacterium E.coli. Reduced antibacterial activity against Gram-positive bacterium B.subtilis. No antibacterial activity against the Gram-negative bacterium P.fluorescens.</text>
</comment>
<comment type="PTM">
    <text evidence="1">Glycosylated.</text>
</comment>
<comment type="miscellaneous">
    <text evidence="1">Stable in the pH range 5.0-9.0 at 37 degrees Celsius. Stable when incubated in the temperature range 25-75 degrees Celsius and pH 7.5.</text>
</comment>
<comment type="similarity">
    <text evidence="1">Belongs to the cystatin family.</text>
</comment>
<accession>P84911</accession>
<name>CYT1_CAPHI</name>
<keyword id="KW-0044">Antibiotic</keyword>
<keyword id="KW-0929">Antimicrobial</keyword>
<keyword id="KW-0903">Direct protein sequencing</keyword>
<keyword id="KW-0325">Glycoprotein</keyword>
<keyword id="KW-0646">Protease inhibitor</keyword>
<keyword id="KW-1185">Reference proteome</keyword>
<keyword id="KW-0789">Thiol protease inhibitor</keyword>
<sequence length="15" mass="1673">DTHISEKIIDCNDIG</sequence>
<reference evidence="3" key="1">
    <citation type="journal article" date="2005" name="Comp. Biochem. Physiol.">
        <title>Isolation, characterization and kinetics of goat cystatins.</title>
        <authorList>
            <person name="Sadaf Z."/>
            <person name="Shahid P.B."/>
            <person name="Bilqees B."/>
        </authorList>
    </citation>
    <scope>PROTEIN SEQUENCE</scope>
    <scope>FUNCTION</scope>
    <scope>GLYCOSYLATION</scope>
    <source>
        <tissue evidence="1">Kidney</tissue>
    </source>
</reference>
<proteinExistence type="evidence at protein level"/>
<protein>
    <recommendedName>
        <fullName>Cystatin-1</fullName>
    </recommendedName>
    <alternativeName>
        <fullName>Cystatin-I</fullName>
    </alternativeName>
</protein>
<evidence type="ECO:0000269" key="1">
    <source>
    </source>
</evidence>
<evidence type="ECO:0000303" key="2">
    <source>
    </source>
</evidence>
<evidence type="ECO:0000305" key="3"/>
<dbReference type="Proteomes" id="UP000291000">
    <property type="component" value="Unassembled WGS sequence"/>
</dbReference>
<dbReference type="Proteomes" id="UP000694566">
    <property type="component" value="Unplaced"/>
</dbReference>
<dbReference type="GO" id="GO:0004869">
    <property type="term" value="F:cysteine-type endopeptidase inhibitor activity"/>
    <property type="evidence" value="ECO:0000314"/>
    <property type="project" value="UniProtKB"/>
</dbReference>
<dbReference type="GO" id="GO:0050829">
    <property type="term" value="P:defense response to Gram-negative bacterium"/>
    <property type="evidence" value="ECO:0000314"/>
    <property type="project" value="UniProtKB"/>
</dbReference>
<dbReference type="GO" id="GO:0050830">
    <property type="term" value="P:defense response to Gram-positive bacterium"/>
    <property type="evidence" value="ECO:0000314"/>
    <property type="project" value="UniProtKB"/>
</dbReference>
<organism>
    <name type="scientific">Capra hircus</name>
    <name type="common">Goat</name>
    <dbReference type="NCBI Taxonomy" id="9925"/>
    <lineage>
        <taxon>Eukaryota</taxon>
        <taxon>Metazoa</taxon>
        <taxon>Chordata</taxon>
        <taxon>Craniata</taxon>
        <taxon>Vertebrata</taxon>
        <taxon>Euteleostomi</taxon>
        <taxon>Mammalia</taxon>
        <taxon>Eutheria</taxon>
        <taxon>Laurasiatheria</taxon>
        <taxon>Artiodactyla</taxon>
        <taxon>Ruminantia</taxon>
        <taxon>Pecora</taxon>
        <taxon>Bovidae</taxon>
        <taxon>Caprinae</taxon>
        <taxon>Capra</taxon>
    </lineage>
</organism>
<feature type="chain" id="PRO_0000248504" description="Cystatin-1">
    <location>
        <begin position="1"/>
        <end position="15" status="greater than"/>
    </location>
</feature>
<feature type="unsure residue" description="K or Y">
    <location>
        <position position="7"/>
    </location>
</feature>
<feature type="non-terminal residue" evidence="2">
    <location>
        <position position="15"/>
    </location>
</feature>